<dbReference type="EMBL" id="Z28622">
    <property type="protein sequence ID" value="CAA82262.1"/>
    <property type="molecule type" value="mRNA"/>
</dbReference>
<dbReference type="EMBL" id="AF209743">
    <property type="protein sequence ID" value="AAF24766.1"/>
    <property type="molecule type" value="Genomic_DNA"/>
</dbReference>
<dbReference type="EMBL" id="AF209743">
    <property type="protein sequence ID" value="AAF24767.1"/>
    <property type="molecule type" value="Genomic_DNA"/>
</dbReference>
<dbReference type="EMBL" id="AE013599">
    <property type="protein sequence ID" value="AAF58150.1"/>
    <property type="molecule type" value="Genomic_DNA"/>
</dbReference>
<dbReference type="EMBL" id="AE013599">
    <property type="protein sequence ID" value="AAM68530.1"/>
    <property type="molecule type" value="Genomic_DNA"/>
</dbReference>
<dbReference type="EMBL" id="AY070566">
    <property type="protein sequence ID" value="AAL48037.1"/>
    <property type="molecule type" value="mRNA"/>
</dbReference>
<dbReference type="PIR" id="S42402">
    <property type="entry name" value="S42402"/>
</dbReference>
<dbReference type="RefSeq" id="NP_476861.1">
    <molecule id="Q24595-1"/>
    <property type="nucleotide sequence ID" value="NM_057513.4"/>
</dbReference>
<dbReference type="RefSeq" id="NP_725451.1">
    <molecule id="Q24595-3"/>
    <property type="nucleotide sequence ID" value="NM_166087.2"/>
</dbReference>
<dbReference type="SMR" id="Q24595"/>
<dbReference type="BioGRID" id="62434">
    <property type="interactions" value="6"/>
</dbReference>
<dbReference type="FunCoup" id="Q24595">
    <property type="interactions" value="1752"/>
</dbReference>
<dbReference type="IntAct" id="Q24595">
    <property type="interactions" value="16"/>
</dbReference>
<dbReference type="STRING" id="7227.FBpp0086505"/>
<dbReference type="iPTMnet" id="Q24595"/>
<dbReference type="PaxDb" id="7227-FBpp0086505"/>
<dbReference type="EnsemblMetazoa" id="FBtr0087373">
    <molecule id="Q24595-3"/>
    <property type="protein sequence ID" value="FBpp0086505"/>
    <property type="gene ID" value="FBgn0004698"/>
</dbReference>
<dbReference type="EnsemblMetazoa" id="FBtr0087374">
    <molecule id="Q24595-1"/>
    <property type="protein sequence ID" value="FBpp0086506"/>
    <property type="gene ID" value="FBgn0004698"/>
</dbReference>
<dbReference type="GeneID" id="36697"/>
<dbReference type="KEGG" id="dme:Dmel_CG8153"/>
<dbReference type="AGR" id="FB:FBgn0004698"/>
<dbReference type="CTD" id="7508"/>
<dbReference type="FlyBase" id="FBgn0004698">
    <property type="gene designation" value="Xpc"/>
</dbReference>
<dbReference type="VEuPathDB" id="VectorBase:FBgn0004698"/>
<dbReference type="eggNOG" id="KOG2179">
    <property type="taxonomic scope" value="Eukaryota"/>
</dbReference>
<dbReference type="GeneTree" id="ENSGT00390000005194"/>
<dbReference type="HOGENOM" id="CLU_009925_0_0_1"/>
<dbReference type="InParanoid" id="Q24595"/>
<dbReference type="OMA" id="PMYDGFV"/>
<dbReference type="OrthoDB" id="300780at2759"/>
<dbReference type="PhylomeDB" id="Q24595"/>
<dbReference type="Reactome" id="R-DME-5696394">
    <property type="pathway name" value="DNA Damage Recognition in GG-NER"/>
</dbReference>
<dbReference type="Reactome" id="R-DME-5696395">
    <property type="pathway name" value="Formation of Incision Complex in GG-NER"/>
</dbReference>
<dbReference type="SignaLink" id="Q24595"/>
<dbReference type="BioGRID-ORCS" id="36697">
    <property type="hits" value="0 hits in 1 CRISPR screen"/>
</dbReference>
<dbReference type="GenomeRNAi" id="36697"/>
<dbReference type="PRO" id="PR:Q24595"/>
<dbReference type="Proteomes" id="UP000000803">
    <property type="component" value="Chromosome 2R"/>
</dbReference>
<dbReference type="Bgee" id="FBgn0004698">
    <property type="expression patterns" value="Expressed in eye disc (Drosophila) and 196 other cell types or tissues"/>
</dbReference>
<dbReference type="ExpressionAtlas" id="Q24595">
    <property type="expression patterns" value="baseline and differential"/>
</dbReference>
<dbReference type="GO" id="GO:0005737">
    <property type="term" value="C:cytoplasm"/>
    <property type="evidence" value="ECO:0000318"/>
    <property type="project" value="GO_Central"/>
</dbReference>
<dbReference type="GO" id="GO:0005829">
    <property type="term" value="C:cytosol"/>
    <property type="evidence" value="ECO:0000250"/>
    <property type="project" value="FlyBase"/>
</dbReference>
<dbReference type="GO" id="GO:0000111">
    <property type="term" value="C:nucleotide-excision repair factor 2 complex"/>
    <property type="evidence" value="ECO:0000318"/>
    <property type="project" value="GO_Central"/>
</dbReference>
<dbReference type="GO" id="GO:0005634">
    <property type="term" value="C:nucleus"/>
    <property type="evidence" value="ECO:0000250"/>
    <property type="project" value="FlyBase"/>
</dbReference>
<dbReference type="GO" id="GO:0071942">
    <property type="term" value="C:XPC complex"/>
    <property type="evidence" value="ECO:0000318"/>
    <property type="project" value="GO_Central"/>
</dbReference>
<dbReference type="GO" id="GO:0003684">
    <property type="term" value="F:damaged DNA binding"/>
    <property type="evidence" value="ECO:0000250"/>
    <property type="project" value="FlyBase"/>
</dbReference>
<dbReference type="GO" id="GO:0003697">
    <property type="term" value="F:single-stranded DNA binding"/>
    <property type="evidence" value="ECO:0000318"/>
    <property type="project" value="GO_Central"/>
</dbReference>
<dbReference type="GO" id="GO:0010777">
    <property type="term" value="P:meiotic mismatch repair involved in reciprocal meiotic recombination"/>
    <property type="evidence" value="ECO:0000316"/>
    <property type="project" value="FlyBase"/>
</dbReference>
<dbReference type="GO" id="GO:0006298">
    <property type="term" value="P:mismatch repair"/>
    <property type="evidence" value="ECO:0000318"/>
    <property type="project" value="GO_Central"/>
</dbReference>
<dbReference type="GO" id="GO:0006289">
    <property type="term" value="P:nucleotide-excision repair"/>
    <property type="evidence" value="ECO:0000250"/>
    <property type="project" value="FlyBase"/>
</dbReference>
<dbReference type="FunFam" id="2.20.20.110:FF:000001">
    <property type="entry name" value="DNA repair protein complementing XP-C cells"/>
    <property type="match status" value="1"/>
</dbReference>
<dbReference type="FunFam" id="3.90.260.10:FF:000022">
    <property type="entry name" value="DNA repair protein complementing XP-C cells homolog"/>
    <property type="match status" value="1"/>
</dbReference>
<dbReference type="FunFam" id="3.30.70.2460:FF:000001">
    <property type="entry name" value="DNA repair protein Rad4 family"/>
    <property type="match status" value="1"/>
</dbReference>
<dbReference type="Gene3D" id="2.20.20.110">
    <property type="entry name" value="Rad4, beta-hairpin domain BHD1"/>
    <property type="match status" value="1"/>
</dbReference>
<dbReference type="Gene3D" id="3.30.70.2460">
    <property type="entry name" value="Rad4, beta-hairpin domain BHD3"/>
    <property type="match status" value="1"/>
</dbReference>
<dbReference type="Gene3D" id="3.90.260.10">
    <property type="entry name" value="Transglutaminase-like"/>
    <property type="match status" value="2"/>
</dbReference>
<dbReference type="InterPro" id="IPR018327">
    <property type="entry name" value="BHD_2"/>
</dbReference>
<dbReference type="InterPro" id="IPR004583">
    <property type="entry name" value="DNA_repair_Rad4"/>
</dbReference>
<dbReference type="InterPro" id="IPR018026">
    <property type="entry name" value="DNA_repair_Rad4-like"/>
</dbReference>
<dbReference type="InterPro" id="IPR038765">
    <property type="entry name" value="Papain-like_cys_pep_sf"/>
</dbReference>
<dbReference type="InterPro" id="IPR018325">
    <property type="entry name" value="Rad4/PNGase_transGLS-fold"/>
</dbReference>
<dbReference type="InterPro" id="IPR018326">
    <property type="entry name" value="Rad4_beta-hairpin_dom1"/>
</dbReference>
<dbReference type="InterPro" id="IPR018328">
    <property type="entry name" value="Rad4_beta-hairpin_dom3"/>
</dbReference>
<dbReference type="InterPro" id="IPR042488">
    <property type="entry name" value="Rad4_BHD3_sf"/>
</dbReference>
<dbReference type="InterPro" id="IPR036985">
    <property type="entry name" value="Transglutaminase-like_sf"/>
</dbReference>
<dbReference type="NCBIfam" id="TIGR00605">
    <property type="entry name" value="rad4"/>
    <property type="match status" value="1"/>
</dbReference>
<dbReference type="PANTHER" id="PTHR12135:SF0">
    <property type="entry name" value="DNA REPAIR PROTEIN COMPLEMENTING XP-C CELLS"/>
    <property type="match status" value="1"/>
</dbReference>
<dbReference type="PANTHER" id="PTHR12135">
    <property type="entry name" value="DNA REPAIR PROTEIN XP-C / RAD4"/>
    <property type="match status" value="1"/>
</dbReference>
<dbReference type="Pfam" id="PF10403">
    <property type="entry name" value="BHD_1"/>
    <property type="match status" value="1"/>
</dbReference>
<dbReference type="Pfam" id="PF10404">
    <property type="entry name" value="BHD_2"/>
    <property type="match status" value="1"/>
</dbReference>
<dbReference type="Pfam" id="PF10405">
    <property type="entry name" value="BHD_3"/>
    <property type="match status" value="1"/>
</dbReference>
<dbReference type="Pfam" id="PF03835">
    <property type="entry name" value="Rad4"/>
    <property type="match status" value="1"/>
</dbReference>
<dbReference type="SMART" id="SM01030">
    <property type="entry name" value="BHD_1"/>
    <property type="match status" value="1"/>
</dbReference>
<dbReference type="SMART" id="SM01031">
    <property type="entry name" value="BHD_2"/>
    <property type="match status" value="1"/>
</dbReference>
<dbReference type="SMART" id="SM01032">
    <property type="entry name" value="BHD_3"/>
    <property type="match status" value="1"/>
</dbReference>
<dbReference type="SUPFAM" id="SSF54001">
    <property type="entry name" value="Cysteine proteinases"/>
    <property type="match status" value="1"/>
</dbReference>
<proteinExistence type="evidence at protein level"/>
<comment type="function">
    <text evidence="1">Involved in DNA excision repair. May play a part in DNA damage recognition and/or in altering chromatin structure to allow access by damage-processing enzymes (By similarity).</text>
</comment>
<comment type="function">
    <text>Involved in nucleotide excision repair of DNA damaged with UV light, bulky adducts, or cross-linking agents.</text>
</comment>
<comment type="subunit">
    <text evidence="1">Heterodimer.</text>
</comment>
<comment type="subcellular location">
    <subcellularLocation>
        <location evidence="5">Nucleus</location>
    </subcellularLocation>
</comment>
<comment type="alternative products">
    <event type="alternative splicing"/>
    <isoform>
        <id>Q24595-1</id>
        <name>1</name>
        <name>A</name>
        <sequence type="displayed"/>
    </isoform>
    <isoform>
        <id>Q24595-2</id>
        <name>2</name>
        <name>B</name>
        <sequence type="described" ref="VSP_015197"/>
    </isoform>
    <isoform>
        <id>Q24595-3</id>
        <name>3</name>
        <name>C</name>
        <sequence type="described" ref="VSP_015198"/>
    </isoform>
</comment>
<comment type="similarity">
    <text evidence="5">Belongs to the XPC family.</text>
</comment>
<organism>
    <name type="scientific">Drosophila melanogaster</name>
    <name type="common">Fruit fly</name>
    <dbReference type="NCBI Taxonomy" id="7227"/>
    <lineage>
        <taxon>Eukaryota</taxon>
        <taxon>Metazoa</taxon>
        <taxon>Ecdysozoa</taxon>
        <taxon>Arthropoda</taxon>
        <taxon>Hexapoda</taxon>
        <taxon>Insecta</taxon>
        <taxon>Pterygota</taxon>
        <taxon>Neoptera</taxon>
        <taxon>Endopterygota</taxon>
        <taxon>Diptera</taxon>
        <taxon>Brachycera</taxon>
        <taxon>Muscomorpha</taxon>
        <taxon>Ephydroidea</taxon>
        <taxon>Drosophilidae</taxon>
        <taxon>Drosophila</taxon>
        <taxon>Sophophora</taxon>
    </lineage>
</organism>
<keyword id="KW-0025">Alternative splicing</keyword>
<keyword id="KW-0227">DNA damage</keyword>
<keyword id="KW-0234">DNA repair</keyword>
<keyword id="KW-0238">DNA-binding</keyword>
<keyword id="KW-0539">Nucleus</keyword>
<keyword id="KW-0597">Phosphoprotein</keyword>
<keyword id="KW-1185">Reference proteome</keyword>
<feature type="chain" id="PRO_0000218295" description="DNA repair protein complementing XP-C cells homolog">
    <location>
        <begin position="1"/>
        <end position="1293"/>
    </location>
</feature>
<feature type="region of interest" description="Disordered" evidence="3">
    <location>
        <begin position="1"/>
        <end position="199"/>
    </location>
</feature>
<feature type="region of interest" description="Disordered" evidence="3">
    <location>
        <begin position="217"/>
        <end position="239"/>
    </location>
</feature>
<feature type="region of interest" description="Disordered" evidence="3">
    <location>
        <begin position="255"/>
        <end position="341"/>
    </location>
</feature>
<feature type="region of interest" description="Disordered" evidence="3">
    <location>
        <begin position="514"/>
        <end position="640"/>
    </location>
</feature>
<feature type="region of interest" description="Disordered" evidence="3">
    <location>
        <begin position="658"/>
        <end position="919"/>
    </location>
</feature>
<feature type="short sequence motif" description="Nuclear localization signal" evidence="2">
    <location>
        <begin position="922"/>
        <end position="938"/>
    </location>
</feature>
<feature type="short sequence motif" description="Nuclear localization signal" evidence="2">
    <location>
        <begin position="1195"/>
        <end position="1211"/>
    </location>
</feature>
<feature type="short sequence motif" description="Nuclear localization signal" evidence="2">
    <location>
        <begin position="1275"/>
        <end position="1291"/>
    </location>
</feature>
<feature type="compositionally biased region" description="Basic and acidic residues" evidence="3">
    <location>
        <begin position="18"/>
        <end position="30"/>
    </location>
</feature>
<feature type="compositionally biased region" description="Acidic residues" evidence="3">
    <location>
        <begin position="31"/>
        <end position="43"/>
    </location>
</feature>
<feature type="compositionally biased region" description="Low complexity" evidence="3">
    <location>
        <begin position="51"/>
        <end position="60"/>
    </location>
</feature>
<feature type="compositionally biased region" description="Polar residues" evidence="3">
    <location>
        <begin position="101"/>
        <end position="130"/>
    </location>
</feature>
<feature type="compositionally biased region" description="Polar residues" evidence="3">
    <location>
        <begin position="226"/>
        <end position="238"/>
    </location>
</feature>
<feature type="compositionally biased region" description="Basic residues" evidence="3">
    <location>
        <begin position="288"/>
        <end position="301"/>
    </location>
</feature>
<feature type="compositionally biased region" description="Acidic residues" evidence="3">
    <location>
        <begin position="313"/>
        <end position="335"/>
    </location>
</feature>
<feature type="compositionally biased region" description="Basic and acidic residues" evidence="3">
    <location>
        <begin position="520"/>
        <end position="578"/>
    </location>
</feature>
<feature type="compositionally biased region" description="Low complexity" evidence="3">
    <location>
        <begin position="580"/>
        <end position="594"/>
    </location>
</feature>
<feature type="compositionally biased region" description="Basic and acidic residues" evidence="3">
    <location>
        <begin position="598"/>
        <end position="612"/>
    </location>
</feature>
<feature type="compositionally biased region" description="Low complexity" evidence="3">
    <location>
        <begin position="658"/>
        <end position="692"/>
    </location>
</feature>
<feature type="compositionally biased region" description="Basic and acidic residues" evidence="3">
    <location>
        <begin position="693"/>
        <end position="711"/>
    </location>
</feature>
<feature type="compositionally biased region" description="Polar residues" evidence="3">
    <location>
        <begin position="720"/>
        <end position="737"/>
    </location>
</feature>
<feature type="compositionally biased region" description="Basic and acidic residues" evidence="3">
    <location>
        <begin position="806"/>
        <end position="818"/>
    </location>
</feature>
<feature type="modified residue" description="Phosphoserine" evidence="4">
    <location>
        <position position="31"/>
    </location>
</feature>
<feature type="modified residue" description="Phosphoserine" evidence="4">
    <location>
        <position position="32"/>
    </location>
</feature>
<feature type="modified residue" description="Phosphoserine" evidence="4">
    <location>
        <position position="37"/>
    </location>
</feature>
<feature type="modified residue" description="Phosphoserine" evidence="4">
    <location>
        <position position="533"/>
    </location>
</feature>
<feature type="modified residue" description="Phosphoserine" evidence="4">
    <location>
        <position position="537"/>
    </location>
</feature>
<feature type="modified residue" description="Phosphoserine" evidence="4">
    <location>
        <position position="908"/>
    </location>
</feature>
<feature type="modified residue" description="Phosphoserine" evidence="4">
    <location>
        <position position="911"/>
    </location>
</feature>
<feature type="splice variant" id="VSP_015197" description="In isoform 2." evidence="5">
    <location>
        <begin position="1"/>
        <end position="782"/>
    </location>
</feature>
<feature type="splice variant" id="VSP_015198" description="In isoform 3." evidence="5">
    <original>G</original>
    <variation>GS</variation>
    <location>
        <position position="63"/>
    </location>
</feature>
<feature type="sequence conflict" description="In Ref. 1; CAA82262 and 2; AAF24766." evidence="5" ref="1 2">
    <original>K</original>
    <variation>Q</variation>
    <location>
        <position position="109"/>
    </location>
</feature>
<feature type="sequence conflict" description="In Ref. 1; CAA82262." evidence="5" ref="1">
    <original>G</original>
    <variation>D</variation>
    <location>
        <position position="134"/>
    </location>
</feature>
<feature type="sequence conflict" description="In Ref. 1; CAA82262." evidence="5" ref="1">
    <original>Y</original>
    <variation>H</variation>
    <location>
        <position position="618"/>
    </location>
</feature>
<feature type="sequence conflict" description="In Ref. 1; CAA82262." evidence="5" ref="1">
    <original>P</original>
    <variation>S</variation>
    <location>
        <position position="743"/>
    </location>
</feature>
<feature type="sequence conflict" description="In Ref. 1; CAA82262." evidence="5" ref="1">
    <original>D</original>
    <variation>A</variation>
    <location>
        <position position="844"/>
    </location>
</feature>
<feature type="sequence conflict" description="In Ref. 2; AAF24766/AAF24767." evidence="5" ref="2">
    <original>D</original>
    <variation>E</variation>
    <location>
        <position position="945"/>
    </location>
</feature>
<feature type="sequence conflict" description="In Ref. 1; CAA82262." evidence="5" ref="1">
    <original>E</original>
    <variation>D</variation>
    <location>
        <position position="1245"/>
    </location>
</feature>
<name>XPC_DROME</name>
<reference key="1">
    <citation type="journal article" date="1994" name="Nucleic Acids Res.">
        <title>Cloning the Drosophila homolog of the Xeroderma pigmentosum complementation group C gene reveals homology between the predicted human and Drosophila polypeptides and that encoded by the yeast RAD4 gene.</title>
        <authorList>
            <person name="Henning K.A."/>
            <person name="Peterson C."/>
            <person name="Legerski R."/>
            <person name="Friedberg E.C."/>
        </authorList>
    </citation>
    <scope>NUCLEOTIDE SEQUENCE [MRNA] (ISOFORM 1)</scope>
    <source>
        <strain>DP CN BW</strain>
        <tissue>Embryo</tissue>
    </source>
</reference>
<reference key="2">
    <citation type="journal article" date="2000" name="Mutat. Res.">
        <title>Nucleotide excision repair endonuclease genes in Drosophila melanogaster.</title>
        <authorList>
            <person name="Sekelsky J.J."/>
            <person name="Hollis K.J."/>
            <person name="Eimerl A.I."/>
            <person name="Burtis K.C."/>
            <person name="Hawley R.S."/>
        </authorList>
    </citation>
    <scope>NUCLEOTIDE SEQUENCE [GENOMIC DNA] (ISOFORMS 1 AND 2)</scope>
</reference>
<reference key="3">
    <citation type="journal article" date="2000" name="Science">
        <title>The genome sequence of Drosophila melanogaster.</title>
        <authorList>
            <person name="Adams M.D."/>
            <person name="Celniker S.E."/>
            <person name="Holt R.A."/>
            <person name="Evans C.A."/>
            <person name="Gocayne J.D."/>
            <person name="Amanatides P.G."/>
            <person name="Scherer S.E."/>
            <person name="Li P.W."/>
            <person name="Hoskins R.A."/>
            <person name="Galle R.F."/>
            <person name="George R.A."/>
            <person name="Lewis S.E."/>
            <person name="Richards S."/>
            <person name="Ashburner M."/>
            <person name="Henderson S.N."/>
            <person name="Sutton G.G."/>
            <person name="Wortman J.R."/>
            <person name="Yandell M.D."/>
            <person name="Zhang Q."/>
            <person name="Chen L.X."/>
            <person name="Brandon R.C."/>
            <person name="Rogers Y.-H.C."/>
            <person name="Blazej R.G."/>
            <person name="Champe M."/>
            <person name="Pfeiffer B.D."/>
            <person name="Wan K.H."/>
            <person name="Doyle C."/>
            <person name="Baxter E.G."/>
            <person name="Helt G."/>
            <person name="Nelson C.R."/>
            <person name="Miklos G.L.G."/>
            <person name="Abril J.F."/>
            <person name="Agbayani A."/>
            <person name="An H.-J."/>
            <person name="Andrews-Pfannkoch C."/>
            <person name="Baldwin D."/>
            <person name="Ballew R.M."/>
            <person name="Basu A."/>
            <person name="Baxendale J."/>
            <person name="Bayraktaroglu L."/>
            <person name="Beasley E.M."/>
            <person name="Beeson K.Y."/>
            <person name="Benos P.V."/>
            <person name="Berman B.P."/>
            <person name="Bhandari D."/>
            <person name="Bolshakov S."/>
            <person name="Borkova D."/>
            <person name="Botchan M.R."/>
            <person name="Bouck J."/>
            <person name="Brokstein P."/>
            <person name="Brottier P."/>
            <person name="Burtis K.C."/>
            <person name="Busam D.A."/>
            <person name="Butler H."/>
            <person name="Cadieu E."/>
            <person name="Center A."/>
            <person name="Chandra I."/>
            <person name="Cherry J.M."/>
            <person name="Cawley S."/>
            <person name="Dahlke C."/>
            <person name="Davenport L.B."/>
            <person name="Davies P."/>
            <person name="de Pablos B."/>
            <person name="Delcher A."/>
            <person name="Deng Z."/>
            <person name="Mays A.D."/>
            <person name="Dew I."/>
            <person name="Dietz S.M."/>
            <person name="Dodson K."/>
            <person name="Doup L.E."/>
            <person name="Downes M."/>
            <person name="Dugan-Rocha S."/>
            <person name="Dunkov B.C."/>
            <person name="Dunn P."/>
            <person name="Durbin K.J."/>
            <person name="Evangelista C.C."/>
            <person name="Ferraz C."/>
            <person name="Ferriera S."/>
            <person name="Fleischmann W."/>
            <person name="Fosler C."/>
            <person name="Gabrielian A.E."/>
            <person name="Garg N.S."/>
            <person name="Gelbart W.M."/>
            <person name="Glasser K."/>
            <person name="Glodek A."/>
            <person name="Gong F."/>
            <person name="Gorrell J.H."/>
            <person name="Gu Z."/>
            <person name="Guan P."/>
            <person name="Harris M."/>
            <person name="Harris N.L."/>
            <person name="Harvey D.A."/>
            <person name="Heiman T.J."/>
            <person name="Hernandez J.R."/>
            <person name="Houck J."/>
            <person name="Hostin D."/>
            <person name="Houston K.A."/>
            <person name="Howland T.J."/>
            <person name="Wei M.-H."/>
            <person name="Ibegwam C."/>
            <person name="Jalali M."/>
            <person name="Kalush F."/>
            <person name="Karpen G.H."/>
            <person name="Ke Z."/>
            <person name="Kennison J.A."/>
            <person name="Ketchum K.A."/>
            <person name="Kimmel B.E."/>
            <person name="Kodira C.D."/>
            <person name="Kraft C.L."/>
            <person name="Kravitz S."/>
            <person name="Kulp D."/>
            <person name="Lai Z."/>
            <person name="Lasko P."/>
            <person name="Lei Y."/>
            <person name="Levitsky A.A."/>
            <person name="Li J.H."/>
            <person name="Li Z."/>
            <person name="Liang Y."/>
            <person name="Lin X."/>
            <person name="Liu X."/>
            <person name="Mattei B."/>
            <person name="McIntosh T.C."/>
            <person name="McLeod M.P."/>
            <person name="McPherson D."/>
            <person name="Merkulov G."/>
            <person name="Milshina N.V."/>
            <person name="Mobarry C."/>
            <person name="Morris J."/>
            <person name="Moshrefi A."/>
            <person name="Mount S.M."/>
            <person name="Moy M."/>
            <person name="Murphy B."/>
            <person name="Murphy L."/>
            <person name="Muzny D.M."/>
            <person name="Nelson D.L."/>
            <person name="Nelson D.R."/>
            <person name="Nelson K.A."/>
            <person name="Nixon K."/>
            <person name="Nusskern D.R."/>
            <person name="Pacleb J.M."/>
            <person name="Palazzolo M."/>
            <person name="Pittman G.S."/>
            <person name="Pan S."/>
            <person name="Pollard J."/>
            <person name="Puri V."/>
            <person name="Reese M.G."/>
            <person name="Reinert K."/>
            <person name="Remington K."/>
            <person name="Saunders R.D.C."/>
            <person name="Scheeler F."/>
            <person name="Shen H."/>
            <person name="Shue B.C."/>
            <person name="Siden-Kiamos I."/>
            <person name="Simpson M."/>
            <person name="Skupski M.P."/>
            <person name="Smith T.J."/>
            <person name="Spier E."/>
            <person name="Spradling A.C."/>
            <person name="Stapleton M."/>
            <person name="Strong R."/>
            <person name="Sun E."/>
            <person name="Svirskas R."/>
            <person name="Tector C."/>
            <person name="Turner R."/>
            <person name="Venter E."/>
            <person name="Wang A.H."/>
            <person name="Wang X."/>
            <person name="Wang Z.-Y."/>
            <person name="Wassarman D.A."/>
            <person name="Weinstock G.M."/>
            <person name="Weissenbach J."/>
            <person name="Williams S.M."/>
            <person name="Woodage T."/>
            <person name="Worley K.C."/>
            <person name="Wu D."/>
            <person name="Yang S."/>
            <person name="Yao Q.A."/>
            <person name="Ye J."/>
            <person name="Yeh R.-F."/>
            <person name="Zaveri J.S."/>
            <person name="Zhan M."/>
            <person name="Zhang G."/>
            <person name="Zhao Q."/>
            <person name="Zheng L."/>
            <person name="Zheng X.H."/>
            <person name="Zhong F.N."/>
            <person name="Zhong W."/>
            <person name="Zhou X."/>
            <person name="Zhu S.C."/>
            <person name="Zhu X."/>
            <person name="Smith H.O."/>
            <person name="Gibbs R.A."/>
            <person name="Myers E.W."/>
            <person name="Rubin G.M."/>
            <person name="Venter J.C."/>
        </authorList>
    </citation>
    <scope>NUCLEOTIDE SEQUENCE [LARGE SCALE GENOMIC DNA]</scope>
    <source>
        <strain>Berkeley</strain>
    </source>
</reference>
<reference key="4">
    <citation type="journal article" date="2002" name="Genome Biol.">
        <title>Annotation of the Drosophila melanogaster euchromatic genome: a systematic review.</title>
        <authorList>
            <person name="Misra S."/>
            <person name="Crosby M.A."/>
            <person name="Mungall C.J."/>
            <person name="Matthews B.B."/>
            <person name="Campbell K.S."/>
            <person name="Hradecky P."/>
            <person name="Huang Y."/>
            <person name="Kaminker J.S."/>
            <person name="Millburn G.H."/>
            <person name="Prochnik S.E."/>
            <person name="Smith C.D."/>
            <person name="Tupy J.L."/>
            <person name="Whitfield E.J."/>
            <person name="Bayraktaroglu L."/>
            <person name="Berman B.P."/>
            <person name="Bettencourt B.R."/>
            <person name="Celniker S.E."/>
            <person name="de Grey A.D.N.J."/>
            <person name="Drysdale R.A."/>
            <person name="Harris N.L."/>
            <person name="Richter J."/>
            <person name="Russo S."/>
            <person name="Schroeder A.J."/>
            <person name="Shu S.Q."/>
            <person name="Stapleton M."/>
            <person name="Yamada C."/>
            <person name="Ashburner M."/>
            <person name="Gelbart W.M."/>
            <person name="Rubin G.M."/>
            <person name="Lewis S.E."/>
        </authorList>
    </citation>
    <scope>GENOME REANNOTATION</scope>
    <scope>ALTERNATIVE SPLICING</scope>
    <source>
        <strain>Berkeley</strain>
    </source>
</reference>
<reference key="5">
    <citation type="journal article" date="2002" name="Genome Biol.">
        <title>A Drosophila full-length cDNA resource.</title>
        <authorList>
            <person name="Stapleton M."/>
            <person name="Carlson J.W."/>
            <person name="Brokstein P."/>
            <person name="Yu C."/>
            <person name="Champe M."/>
            <person name="George R.A."/>
            <person name="Guarin H."/>
            <person name="Kronmiller B."/>
            <person name="Pacleb J.M."/>
            <person name="Park S."/>
            <person name="Wan K.H."/>
            <person name="Rubin G.M."/>
            <person name="Celniker S.E."/>
        </authorList>
    </citation>
    <scope>NUCLEOTIDE SEQUENCE [LARGE SCALE MRNA] (ISOFORM 1)</scope>
    <source>
        <strain>Berkeley</strain>
        <tissue>Embryo</tissue>
    </source>
</reference>
<reference key="6">
    <citation type="journal article" date="2008" name="J. Proteome Res.">
        <title>Phosphoproteome analysis of Drosophila melanogaster embryos.</title>
        <authorList>
            <person name="Zhai B."/>
            <person name="Villen J."/>
            <person name="Beausoleil S.A."/>
            <person name="Mintseris J."/>
            <person name="Gygi S.P."/>
        </authorList>
    </citation>
    <scope>PHOSPHORYLATION [LARGE SCALE ANALYSIS] AT SER-31; SER-32; SER-37; SER-533; SER-537; SER-908 AND SER-911</scope>
    <scope>IDENTIFICATION BY MASS SPECTROMETRY</scope>
    <source>
        <tissue>Embryo</tissue>
    </source>
</reference>
<evidence type="ECO:0000250" key="1"/>
<evidence type="ECO:0000255" key="2"/>
<evidence type="ECO:0000256" key="3">
    <source>
        <dbReference type="SAM" id="MobiDB-lite"/>
    </source>
</evidence>
<evidence type="ECO:0000269" key="4">
    <source>
    </source>
</evidence>
<evidence type="ECO:0000305" key="5"/>
<evidence type="ECO:0000312" key="6">
    <source>
        <dbReference type="FlyBase" id="FBgn0004698"/>
    </source>
</evidence>
<protein>
    <recommendedName>
        <fullName>DNA repair protein complementing XP-C cells homolog</fullName>
    </recommendedName>
    <alternativeName>
        <fullName>Mutagen-sensitive 209 protein</fullName>
    </alternativeName>
    <alternativeName>
        <fullName>XPCDM</fullName>
    </alternativeName>
    <alternativeName>
        <fullName>Xeroderma pigmentosum group C-complementing protein homolog</fullName>
    </alternativeName>
</protein>
<gene>
    <name evidence="6" type="primary">Xpc</name>
    <name evidence="6" type="synonym">mus210</name>
    <name type="synonym">Xpcc</name>
    <name evidence="6" type="ORF">CG8153</name>
</gene>
<sequence length="1293" mass="144224">MSDEEEDSVSEGFSASEDEWKPSKDVKGGESSDDDDSDFDELQAEGGAAGSSGRSSAVAGKRGDHKAPSGIKGSSVKKRKPTGQSLRSKLYNKYRPPPKTFPTSPSQQKENTPRASGSKNAKTPNESGARNQHGPADSSSESSVEDYLVNPADLDLHSTFFAGGQKEKSPAPQFDCNAGITNLSDSGSEDNNESSFEDKAGNAFDFRGLLENANSLERTRDALSKRNVTATPPRSQAATMDVNALLALGENQNYQSVEVEEREGNQRKKAGRGAPAAPPTLDEPSRLSKTKSTRIKRHTKTRPVSTVVANAGDTDDSDFEEVADADLSSDQDDGETPNISGDLEIRVGLEGLRPTKEQKTQHELEMALKRRLNRDIKDRQILLHKVSLMCQIARSLKYNRLLSESDSLMQATLKLLPSRNAYPTERGTELKYLQSFVTWFKTSIKLLSPNLYSAQSPATKEAILEALLEQVKRKEARCKQDMIFIFIALARGMGMHCRLIVNLQPMPLRPAASDLIPIKLRPDDKNKSQTVESERESEDEKPKKDKKAGKPAEKESSKSTISKEAEKKNNAKKAEAKPLSKSTTKGSETTKSGTVPKVKKELSLSSKLVEKSKHQKAYTSSKSDTSFDEKPSTSSSSKCLKEEYSELGLSKKLLKPTLSSKLVLKSKNQSSFSSNKSDTSFEENPSTSSSSKSLKEETAKLSSSKLEDKKVASPAETKTKVQSSLLKRVTTQNISESGDSKKPKVAPVDTFSPVAGRTRRATVKPKTEEKPQVVGSPVIPKLMLSKVKQLNAKHSDTENASPANKHLQEQRNTRETRSRSKSPKVLISPSFLKKKSDGADSTSDPQKHQMAPETKARISPNFLSEALPARQLRSRGQKASSLAIPQLDGGDDVPLPKKRPKLEKLKNSQDSDEVFEPAKPVKKAPVLPKSVQNLRKDRRVMSTDDEGGSRLNRKTDASDMWVEVWSDVEEQWICIDLFKGKLHCVDTIRKNATPGLAYVFAFQDDQSLKDVTARYCASWSTTVRKARVEKAWLDETIAPYLGRRTKRDITEDDQLRRIHSDKPLPKSISEFKDHPLYVLERHLLKFQGLYPPDAPTLGFIRGEAVYSRDCVHLLHSREIWLKSARVVKLGEQPYKVVKARPKWDRLTRTVIKDQPLEIFGYWQTQEYEPPTAENGIVPRNAYGNVELFKDCMLPKKTVHLRLPGLMRICKKLNIDCANAVVGFDFHQGACHPMYDGFIVCEEFREVVTAAWEEDQQVQVLKEQEKYETRVYGNWKKLIKGLLIRERLKKKYNF</sequence>
<accession>Q24595</accession>
<accession>Q7KJI5</accession>
<accession>Q8MLA1</accession>
<accession>Q8MLA2</accession>
<accession>Q9U3Z0</accession>
<accession>Q9U3Z1</accession>
<accession>Q9V7A8</accession>